<keyword id="KW-0004">4Fe-4S</keyword>
<keyword id="KW-0067">ATP-binding</keyword>
<keyword id="KW-0408">Iron</keyword>
<keyword id="KW-0411">Iron-sulfur</keyword>
<keyword id="KW-0479">Metal-binding</keyword>
<keyword id="KW-0496">Mitochondrion</keyword>
<keyword id="KW-0547">Nucleotide-binding</keyword>
<keyword id="KW-1185">Reference proteome</keyword>
<keyword id="KW-0809">Transit peptide</keyword>
<organism>
    <name type="scientific">Arabidopsis thaliana</name>
    <name type="common">Mouse-ear cress</name>
    <dbReference type="NCBI Taxonomy" id="3702"/>
    <lineage>
        <taxon>Eukaryota</taxon>
        <taxon>Viridiplantae</taxon>
        <taxon>Streptophyta</taxon>
        <taxon>Embryophyta</taxon>
        <taxon>Tracheophyta</taxon>
        <taxon>Spermatophyta</taxon>
        <taxon>Magnoliopsida</taxon>
        <taxon>eudicotyledons</taxon>
        <taxon>Gunneridae</taxon>
        <taxon>Pentapetalae</taxon>
        <taxon>rosids</taxon>
        <taxon>malvids</taxon>
        <taxon>Brassicales</taxon>
        <taxon>Brassicaceae</taxon>
        <taxon>Camelineae</taxon>
        <taxon>Arabidopsis</taxon>
    </lineage>
</organism>
<proteinExistence type="evidence at transcript level"/>
<protein>
    <recommendedName>
        <fullName evidence="5 6">Iron-sulfur protein required for NADH dehydrogenase, mitochondrial</fullName>
    </recommendedName>
    <alternativeName>
        <fullName evidence="5 6">IND1 homolog</fullName>
    </alternativeName>
    <alternativeName>
        <fullName evidence="6">IND1-like protein</fullName>
    </alternativeName>
    <alternativeName>
        <fullName evidence="6">Nucleotide-binding protein-like</fullName>
    </alternativeName>
</protein>
<accession>O49472</accession>
<accession>Q8LEZ2</accession>
<comment type="function">
    <text evidence="2 4">Essential during early vegetative growth (PubMed:24179128). Required for the assembly of the mitochondrial membrane respiratory chain NADH dehydrogenase (Complex I) (PubMed:24179128). Involved in mitochondrial translation activity (PubMed:24179128). May deliver of one or more Fe-S clusters to complex I subunits (By similarity).</text>
</comment>
<comment type="cofactor">
    <cofactor evidence="1">
        <name>[4Fe-4S] cluster</name>
        <dbReference type="ChEBI" id="CHEBI:49883"/>
    </cofactor>
    <text evidence="1">Binds 1 [4Fe-4S] cluster.</text>
</comment>
<comment type="subcellular location">
    <subcellularLocation>
        <location evidence="4">Mitochondrion matrix</location>
    </subcellularLocation>
</comment>
<comment type="disruption phenotype">
    <text evidence="4">Homozygous mutants are lethal, seeds failing to germinate or arrested seedlings in early growth (PubMed:24179128). Loss of mitochondrial complex I and low levels of a 650-kDa assembly intermediate associated with a reduced mitochondrial translation activity (PubMed:24179128). Heterozygous plants display delayed bolting and flowering, with small and highly branched inflorescences; they also have sporophytic defects in female and male gametophyte development (PubMed:24179128).</text>
</comment>
<comment type="similarity">
    <text evidence="7">Belongs to the Mrp/NBP35 ATP-binding proteins family.</text>
</comment>
<feature type="transit peptide" description="Mitochondrion" evidence="3">
    <location>
        <begin position="1"/>
        <end position="22"/>
    </location>
</feature>
<feature type="chain" id="PRO_0000454914" description="Iron-sulfur protein required for NADH dehydrogenase, mitochondrial">
    <location>
        <begin position="23"/>
        <end position="313"/>
    </location>
</feature>
<feature type="binding site" evidence="3">
    <location>
        <begin position="51"/>
        <end position="58"/>
    </location>
    <ligand>
        <name>ATP</name>
        <dbReference type="ChEBI" id="CHEBI:30616"/>
    </ligand>
</feature>
<feature type="sequence conflict" description="In Ref. 4; AAM61690." evidence="7" ref="4">
    <original>H</original>
    <variation>P</variation>
    <location>
        <position position="19"/>
    </location>
</feature>
<feature type="sequence conflict" description="In Ref. 4; AAM61690." evidence="7" ref="4">
    <original>E</original>
    <variation>D</variation>
    <location>
        <position position="294"/>
    </location>
</feature>
<gene>
    <name evidence="5 6" type="primary">INDH</name>
    <name evidence="6" type="synonym">INDL</name>
    <name evidence="6" type="synonym">NUBPL</name>
    <name evidence="8" type="ordered locus">At4g19540</name>
    <name evidence="9" type="ORF">F24J7.100</name>
</gene>
<sequence>MATVALLRSLRRRELHAAHISAYKFSSASAGGRTTELRLHGVKDIIAVASGKGGVGKSSTAVNLAVALANKCELKIGLLDADVYGPSVPIMMNINQKPQVNQDMKMIPVENYGVKCMSMGLLVEKDAPLVWRGPMVMSALAKMTKGVDWGDLDILVVDMPPGTGDAQISISQNLKLSGAVIVSTPQDVALADANRGISMFDKVRVPILGLVENMSCFVCPHCNEPSFIFGKEGARRTAAKKGLKLIGEIPLEMSIREGSDEGVPVVVSSPGSIVSKAYQDLAQNVVKGLKELRENPDNEIQMKLNVPHSSHSS</sequence>
<dbReference type="EMBL" id="AL021768">
    <property type="protein sequence ID" value="CAA16931.1"/>
    <property type="molecule type" value="Genomic_DNA"/>
</dbReference>
<dbReference type="EMBL" id="AL161551">
    <property type="protein sequence ID" value="CAB78956.1"/>
    <property type="molecule type" value="Genomic_DNA"/>
</dbReference>
<dbReference type="EMBL" id="CP002687">
    <property type="protein sequence ID" value="AEE84196.1"/>
    <property type="molecule type" value="Genomic_DNA"/>
</dbReference>
<dbReference type="EMBL" id="AK229020">
    <property type="protein sequence ID" value="BAF00906.1"/>
    <property type="molecule type" value="mRNA"/>
</dbReference>
<dbReference type="EMBL" id="AY085137">
    <property type="protein sequence ID" value="AAM61690.1"/>
    <property type="molecule type" value="mRNA"/>
</dbReference>
<dbReference type="PIR" id="T06147">
    <property type="entry name" value="T06147"/>
</dbReference>
<dbReference type="RefSeq" id="NP_193689.1">
    <property type="nucleotide sequence ID" value="NM_118074.2"/>
</dbReference>
<dbReference type="SMR" id="O49472"/>
<dbReference type="FunCoup" id="O49472">
    <property type="interactions" value="1989"/>
</dbReference>
<dbReference type="STRING" id="3702.O49472"/>
<dbReference type="PaxDb" id="3702-AT4G19540.1"/>
<dbReference type="ProteomicsDB" id="177582"/>
<dbReference type="EnsemblPlants" id="AT4G19540.1">
    <property type="protein sequence ID" value="AT4G19540.1"/>
    <property type="gene ID" value="AT4G19540"/>
</dbReference>
<dbReference type="GeneID" id="827696"/>
<dbReference type="Gramene" id="AT4G19540.1">
    <property type="protein sequence ID" value="AT4G19540.1"/>
    <property type="gene ID" value="AT4G19540"/>
</dbReference>
<dbReference type="KEGG" id="ath:AT4G19540"/>
<dbReference type="Araport" id="AT4G19540"/>
<dbReference type="TAIR" id="AT4G19540">
    <property type="gene designation" value="INDH"/>
</dbReference>
<dbReference type="eggNOG" id="KOG3022">
    <property type="taxonomic scope" value="Eukaryota"/>
</dbReference>
<dbReference type="HOGENOM" id="CLU_024839_0_2_1"/>
<dbReference type="InParanoid" id="O49472"/>
<dbReference type="OMA" id="CNHESHI"/>
<dbReference type="OrthoDB" id="1741334at2759"/>
<dbReference type="PhylomeDB" id="O49472"/>
<dbReference type="PRO" id="PR:O49472"/>
<dbReference type="Proteomes" id="UP000006548">
    <property type="component" value="Chromosome 4"/>
</dbReference>
<dbReference type="ExpressionAtlas" id="O49472">
    <property type="expression patterns" value="baseline and differential"/>
</dbReference>
<dbReference type="GO" id="GO:0005759">
    <property type="term" value="C:mitochondrial matrix"/>
    <property type="evidence" value="ECO:0000314"/>
    <property type="project" value="UniProtKB"/>
</dbReference>
<dbReference type="GO" id="GO:0005739">
    <property type="term" value="C:mitochondrion"/>
    <property type="evidence" value="ECO:0000314"/>
    <property type="project" value="TAIR"/>
</dbReference>
<dbReference type="GO" id="GO:0051539">
    <property type="term" value="F:4 iron, 4 sulfur cluster binding"/>
    <property type="evidence" value="ECO:0007669"/>
    <property type="project" value="UniProtKB-KW"/>
</dbReference>
<dbReference type="GO" id="GO:0005524">
    <property type="term" value="F:ATP binding"/>
    <property type="evidence" value="ECO:0007669"/>
    <property type="project" value="UniProtKB-KW"/>
</dbReference>
<dbReference type="GO" id="GO:0140663">
    <property type="term" value="F:ATP-dependent FeS chaperone activity"/>
    <property type="evidence" value="ECO:0007669"/>
    <property type="project" value="InterPro"/>
</dbReference>
<dbReference type="GO" id="GO:0046872">
    <property type="term" value="F:metal ion binding"/>
    <property type="evidence" value="ECO:0007669"/>
    <property type="project" value="UniProtKB-KW"/>
</dbReference>
<dbReference type="GO" id="GO:0016226">
    <property type="term" value="P:iron-sulfur cluster assembly"/>
    <property type="evidence" value="ECO:0007669"/>
    <property type="project" value="InterPro"/>
</dbReference>
<dbReference type="GO" id="GO:0032981">
    <property type="term" value="P:mitochondrial respiratory chain complex I assembly"/>
    <property type="evidence" value="ECO:0000315"/>
    <property type="project" value="UniProtKB"/>
</dbReference>
<dbReference type="GO" id="GO:0032543">
    <property type="term" value="P:mitochondrial translation"/>
    <property type="evidence" value="ECO:0000315"/>
    <property type="project" value="UniProtKB"/>
</dbReference>
<dbReference type="CDD" id="cd02037">
    <property type="entry name" value="Mrp_NBP35"/>
    <property type="match status" value="1"/>
</dbReference>
<dbReference type="FunFam" id="3.40.50.300:FF:000709">
    <property type="entry name" value="Iron-sulfur protein NUBPL isoform X1"/>
    <property type="match status" value="1"/>
</dbReference>
<dbReference type="Gene3D" id="3.40.50.300">
    <property type="entry name" value="P-loop containing nucleotide triphosphate hydrolases"/>
    <property type="match status" value="1"/>
</dbReference>
<dbReference type="HAMAP" id="MF_02040">
    <property type="entry name" value="Mrp_NBP35"/>
    <property type="match status" value="1"/>
</dbReference>
<dbReference type="InterPro" id="IPR019591">
    <property type="entry name" value="Mrp/NBP35_ATP-bd"/>
</dbReference>
<dbReference type="InterPro" id="IPR044304">
    <property type="entry name" value="NUBPL-like"/>
</dbReference>
<dbReference type="InterPro" id="IPR027417">
    <property type="entry name" value="P-loop_NTPase"/>
</dbReference>
<dbReference type="InterPro" id="IPR033756">
    <property type="entry name" value="YlxH/NBP35"/>
</dbReference>
<dbReference type="PANTHER" id="PTHR42961">
    <property type="entry name" value="IRON-SULFUR PROTEIN NUBPL"/>
    <property type="match status" value="1"/>
</dbReference>
<dbReference type="PANTHER" id="PTHR42961:SF2">
    <property type="entry name" value="IRON-SULFUR PROTEIN NUBPL"/>
    <property type="match status" value="1"/>
</dbReference>
<dbReference type="Pfam" id="PF10609">
    <property type="entry name" value="ParA"/>
    <property type="match status" value="1"/>
</dbReference>
<dbReference type="SUPFAM" id="SSF52540">
    <property type="entry name" value="P-loop containing nucleoside triphosphate hydrolases"/>
    <property type="match status" value="1"/>
</dbReference>
<evidence type="ECO:0000250" key="1">
    <source>
        <dbReference type="UniProtKB" id="Q6CE48"/>
    </source>
</evidence>
<evidence type="ECO:0000250" key="2">
    <source>
        <dbReference type="UniProtKB" id="Q8TB37"/>
    </source>
</evidence>
<evidence type="ECO:0000255" key="3"/>
<evidence type="ECO:0000269" key="4">
    <source>
    </source>
</evidence>
<evidence type="ECO:0000303" key="5">
    <source>
    </source>
</evidence>
<evidence type="ECO:0000303" key="6">
    <source>
    </source>
</evidence>
<evidence type="ECO:0000305" key="7"/>
<evidence type="ECO:0000312" key="8">
    <source>
        <dbReference type="Araport" id="AT4G19540"/>
    </source>
</evidence>
<evidence type="ECO:0000312" key="9">
    <source>
        <dbReference type="EMBL" id="CAA16931.1"/>
    </source>
</evidence>
<reference key="1">
    <citation type="journal article" date="1999" name="Nature">
        <title>Sequence and analysis of chromosome 4 of the plant Arabidopsis thaliana.</title>
        <authorList>
            <person name="Mayer K.F.X."/>
            <person name="Schueller C."/>
            <person name="Wambutt R."/>
            <person name="Murphy G."/>
            <person name="Volckaert G."/>
            <person name="Pohl T."/>
            <person name="Duesterhoeft A."/>
            <person name="Stiekema W."/>
            <person name="Entian K.-D."/>
            <person name="Terryn N."/>
            <person name="Harris B."/>
            <person name="Ansorge W."/>
            <person name="Brandt P."/>
            <person name="Grivell L.A."/>
            <person name="Rieger M."/>
            <person name="Weichselgartner M."/>
            <person name="de Simone V."/>
            <person name="Obermaier B."/>
            <person name="Mache R."/>
            <person name="Mueller M."/>
            <person name="Kreis M."/>
            <person name="Delseny M."/>
            <person name="Puigdomenech P."/>
            <person name="Watson M."/>
            <person name="Schmidtheini T."/>
            <person name="Reichert B."/>
            <person name="Portetelle D."/>
            <person name="Perez-Alonso M."/>
            <person name="Boutry M."/>
            <person name="Bancroft I."/>
            <person name="Vos P."/>
            <person name="Hoheisel J."/>
            <person name="Zimmermann W."/>
            <person name="Wedler H."/>
            <person name="Ridley P."/>
            <person name="Langham S.-A."/>
            <person name="McCullagh B."/>
            <person name="Bilham L."/>
            <person name="Robben J."/>
            <person name="van der Schueren J."/>
            <person name="Grymonprez B."/>
            <person name="Chuang Y.-J."/>
            <person name="Vandenbussche F."/>
            <person name="Braeken M."/>
            <person name="Weltjens I."/>
            <person name="Voet M."/>
            <person name="Bastiaens I."/>
            <person name="Aert R."/>
            <person name="Defoor E."/>
            <person name="Weitzenegger T."/>
            <person name="Bothe G."/>
            <person name="Ramsperger U."/>
            <person name="Hilbert H."/>
            <person name="Braun M."/>
            <person name="Holzer E."/>
            <person name="Brandt A."/>
            <person name="Peters S."/>
            <person name="van Staveren M."/>
            <person name="Dirkse W."/>
            <person name="Mooijman P."/>
            <person name="Klein Lankhorst R."/>
            <person name="Rose M."/>
            <person name="Hauf J."/>
            <person name="Koetter P."/>
            <person name="Berneiser S."/>
            <person name="Hempel S."/>
            <person name="Feldpausch M."/>
            <person name="Lamberth S."/>
            <person name="Van den Daele H."/>
            <person name="De Keyser A."/>
            <person name="Buysshaert C."/>
            <person name="Gielen J."/>
            <person name="Villarroel R."/>
            <person name="De Clercq R."/>
            <person name="van Montagu M."/>
            <person name="Rogers J."/>
            <person name="Cronin A."/>
            <person name="Quail M.A."/>
            <person name="Bray-Allen S."/>
            <person name="Clark L."/>
            <person name="Doggett J."/>
            <person name="Hall S."/>
            <person name="Kay M."/>
            <person name="Lennard N."/>
            <person name="McLay K."/>
            <person name="Mayes R."/>
            <person name="Pettett A."/>
            <person name="Rajandream M.A."/>
            <person name="Lyne M."/>
            <person name="Benes V."/>
            <person name="Rechmann S."/>
            <person name="Borkova D."/>
            <person name="Bloecker H."/>
            <person name="Scharfe M."/>
            <person name="Grimm M."/>
            <person name="Loehnert T.-H."/>
            <person name="Dose S."/>
            <person name="de Haan M."/>
            <person name="Maarse A.C."/>
            <person name="Schaefer M."/>
            <person name="Mueller-Auer S."/>
            <person name="Gabel C."/>
            <person name="Fuchs M."/>
            <person name="Fartmann B."/>
            <person name="Granderath K."/>
            <person name="Dauner D."/>
            <person name="Herzl A."/>
            <person name="Neumann S."/>
            <person name="Argiriou A."/>
            <person name="Vitale D."/>
            <person name="Liguori R."/>
            <person name="Piravandi E."/>
            <person name="Massenet O."/>
            <person name="Quigley F."/>
            <person name="Clabauld G."/>
            <person name="Muendlein A."/>
            <person name="Felber R."/>
            <person name="Schnabl S."/>
            <person name="Hiller R."/>
            <person name="Schmidt W."/>
            <person name="Lecharny A."/>
            <person name="Aubourg S."/>
            <person name="Chefdor F."/>
            <person name="Cooke R."/>
            <person name="Berger C."/>
            <person name="Monfort A."/>
            <person name="Casacuberta E."/>
            <person name="Gibbons T."/>
            <person name="Weber N."/>
            <person name="Vandenbol M."/>
            <person name="Bargues M."/>
            <person name="Terol J."/>
            <person name="Torres A."/>
            <person name="Perez-Perez A."/>
            <person name="Purnelle B."/>
            <person name="Bent E."/>
            <person name="Johnson S."/>
            <person name="Tacon D."/>
            <person name="Jesse T."/>
            <person name="Heijnen L."/>
            <person name="Schwarz S."/>
            <person name="Scholler P."/>
            <person name="Heber S."/>
            <person name="Francs P."/>
            <person name="Bielke C."/>
            <person name="Frishman D."/>
            <person name="Haase D."/>
            <person name="Lemcke K."/>
            <person name="Mewes H.-W."/>
            <person name="Stocker S."/>
            <person name="Zaccaria P."/>
            <person name="Bevan M."/>
            <person name="Wilson R.K."/>
            <person name="de la Bastide M."/>
            <person name="Habermann K."/>
            <person name="Parnell L."/>
            <person name="Dedhia N."/>
            <person name="Gnoj L."/>
            <person name="Schutz K."/>
            <person name="Huang E."/>
            <person name="Spiegel L."/>
            <person name="Sekhon M."/>
            <person name="Murray J."/>
            <person name="Sheet P."/>
            <person name="Cordes M."/>
            <person name="Abu-Threideh J."/>
            <person name="Stoneking T."/>
            <person name="Kalicki J."/>
            <person name="Graves T."/>
            <person name="Harmon G."/>
            <person name="Edwards J."/>
            <person name="Latreille P."/>
            <person name="Courtney L."/>
            <person name="Cloud J."/>
            <person name="Abbott A."/>
            <person name="Scott K."/>
            <person name="Johnson D."/>
            <person name="Minx P."/>
            <person name="Bentley D."/>
            <person name="Fulton B."/>
            <person name="Miller N."/>
            <person name="Greco T."/>
            <person name="Kemp K."/>
            <person name="Kramer J."/>
            <person name="Fulton L."/>
            <person name="Mardis E."/>
            <person name="Dante M."/>
            <person name="Pepin K."/>
            <person name="Hillier L.W."/>
            <person name="Nelson J."/>
            <person name="Spieth J."/>
            <person name="Ryan E."/>
            <person name="Andrews S."/>
            <person name="Geisel C."/>
            <person name="Layman D."/>
            <person name="Du H."/>
            <person name="Ali J."/>
            <person name="Berghoff A."/>
            <person name="Jones K."/>
            <person name="Drone K."/>
            <person name="Cotton M."/>
            <person name="Joshu C."/>
            <person name="Antonoiu B."/>
            <person name="Zidanic M."/>
            <person name="Strong C."/>
            <person name="Sun H."/>
            <person name="Lamar B."/>
            <person name="Yordan C."/>
            <person name="Ma P."/>
            <person name="Zhong J."/>
            <person name="Preston R."/>
            <person name="Vil D."/>
            <person name="Shekher M."/>
            <person name="Matero A."/>
            <person name="Shah R."/>
            <person name="Swaby I.K."/>
            <person name="O'Shaughnessy A."/>
            <person name="Rodriguez M."/>
            <person name="Hoffman J."/>
            <person name="Till S."/>
            <person name="Granat S."/>
            <person name="Shohdy N."/>
            <person name="Hasegawa A."/>
            <person name="Hameed A."/>
            <person name="Lodhi M."/>
            <person name="Johnson A."/>
            <person name="Chen E."/>
            <person name="Marra M.A."/>
            <person name="Martienssen R."/>
            <person name="McCombie W.R."/>
        </authorList>
    </citation>
    <scope>NUCLEOTIDE SEQUENCE [LARGE SCALE GENOMIC DNA]</scope>
    <source>
        <strain>cv. Columbia</strain>
    </source>
</reference>
<reference key="2">
    <citation type="journal article" date="2017" name="Plant J.">
        <title>Araport11: a complete reannotation of the Arabidopsis thaliana reference genome.</title>
        <authorList>
            <person name="Cheng C.Y."/>
            <person name="Krishnakumar V."/>
            <person name="Chan A.P."/>
            <person name="Thibaud-Nissen F."/>
            <person name="Schobel S."/>
            <person name="Town C.D."/>
        </authorList>
    </citation>
    <scope>GENOME REANNOTATION</scope>
    <source>
        <strain>cv. Columbia</strain>
    </source>
</reference>
<reference key="3">
    <citation type="submission" date="2006-07" db="EMBL/GenBank/DDBJ databases">
        <title>Large-scale analysis of RIKEN Arabidopsis full-length (RAFL) cDNAs.</title>
        <authorList>
            <person name="Totoki Y."/>
            <person name="Seki M."/>
            <person name="Ishida J."/>
            <person name="Nakajima M."/>
            <person name="Enju A."/>
            <person name="Kamiya A."/>
            <person name="Narusaka M."/>
            <person name="Shin-i T."/>
            <person name="Nakagawa M."/>
            <person name="Sakamoto N."/>
            <person name="Oishi K."/>
            <person name="Kohara Y."/>
            <person name="Kobayashi M."/>
            <person name="Toyoda A."/>
            <person name="Sakaki Y."/>
            <person name="Sakurai T."/>
            <person name="Iida K."/>
            <person name="Akiyama K."/>
            <person name="Satou M."/>
            <person name="Toyoda T."/>
            <person name="Konagaya A."/>
            <person name="Carninci P."/>
            <person name="Kawai J."/>
            <person name="Hayashizaki Y."/>
            <person name="Shinozaki K."/>
        </authorList>
    </citation>
    <scope>NUCLEOTIDE SEQUENCE [LARGE SCALE MRNA]</scope>
    <source>
        <strain>cv. Columbia</strain>
    </source>
</reference>
<reference key="4">
    <citation type="submission" date="2002-03" db="EMBL/GenBank/DDBJ databases">
        <title>Full-length cDNA from Arabidopsis thaliana.</title>
        <authorList>
            <person name="Brover V.V."/>
            <person name="Troukhan M.E."/>
            <person name="Alexandrov N.A."/>
            <person name="Lu Y.-P."/>
            <person name="Flavell R.B."/>
            <person name="Feldmann K.A."/>
        </authorList>
    </citation>
    <scope>NUCLEOTIDE SEQUENCE [LARGE SCALE MRNA]</scope>
</reference>
<reference key="5">
    <citation type="journal article" date="2013" name="Plant Cell">
        <title>The evolutionarily conserved iron-sulfur protein INDH is required for complex I assembly and mitochondrial translation in Arabidopsis [corrected].</title>
        <authorList>
            <person name="Wydro M.M."/>
            <person name="Sharma P."/>
            <person name="Foster J.M."/>
            <person name="Bych K."/>
            <person name="Meyer E.H."/>
            <person name="Balk J."/>
        </authorList>
    </citation>
    <scope>FUNCTION</scope>
    <scope>DISRUPTION PHENOTYPE</scope>
    <scope>SUBCELLULAR LOCATION</scope>
    <source>
        <strain>cv. Columbia</strain>
    </source>
</reference>
<reference key="6">
    <citation type="journal article" date="2016" name="Biochim. Biophys. Acta">
        <title>Plant mitochondrial Complex I composition and assembly: A review.</title>
        <authorList>
            <person name="Subrahmanian N."/>
            <person name="Remacle C."/>
            <person name="Hamel P.P."/>
        </authorList>
    </citation>
    <scope>REVIEW ON MITOCHONDRIAL COMPLEX I</scope>
</reference>
<name>INDH_ARATH</name>